<protein>
    <recommendedName>
        <fullName evidence="5">Cytochrome P450 monooxygenase AtmP</fullName>
        <ecNumber evidence="7">1.-.-.-</ecNumber>
    </recommendedName>
    <alternativeName>
        <fullName evidence="5">Aflatrem synthesis protein P</fullName>
    </alternativeName>
</protein>
<proteinExistence type="evidence at transcript level"/>
<sequence length="519" mass="59046">MDKLTATLAKVNYPSEVENGSMLLVVTLVILFLWFIIPSPVKRSNVSVPTVTLFNPYLPEFLSRVWFNSTAATVIYKGYRQHKDRAFRLLKPDGDIIVLSNKYVEELRQLPLTTLNALEAVFEDHVGKYTTILDDSHLHTEVIQKRLTPAINRLIPRIIDELDHGFAVEMPECEDKWVLIRPYEVFLRLVARAGARVFVGPDFCRTEKWLTASIDFTKNIFMTITLLRPIPSFLHPIIGPMLPSSRSLDTQLRYVQDELLGPEIVKRRQRQASGDPDYEKPDDFLQWMIDLAQNDKEGDPGNIAHRLLGLTSMAVVHTSAMSITHGLYDLITMAQWLEPLRQEIQEAMPDWKSSSYSSLVSLRRLDSFLKESQRFNPPGELSFHRVVKKDLVLSDGLRLPKGTHICMASGPIGMDTKYVSDPTTFDAFRYVDGDKAQSQFVHTSATSMHFGLGRYACPGRFFATFVLKAILSRFLVEYEFRFGPDQVGRPKNMLLGDKIVPNTSVDVYVRKRTGSRSTA</sequence>
<comment type="function">
    <text evidence="3 4">Cytochrome P450 monooxygenase; part of the ATM2 gene cluster that mediates the biosynthesis of aflatrem, a tremorgenic mycotoxin with acute neurotoxic effects (PubMed:19801473, PubMed:2867895). Synthesis of geranylgeranyl diphosphate (GGPP) by AtmG (a GGPP synthase) precedes condensation of GGPP with indole 3-glycerol phosphate, followed by epoxidation and cyclization by AtmM (a FAD-dependent monooxygenase) and AtmC (a prenyltransferase) to produce paspaline (PubMed:19801473). AtmB is also essential for paspaline production, but its exact role has not been identified yet (PubMed:19801473). AtmP, a cytochrome P450 monooxygenase, subsequently converts paspaline to 13-desoxypaxilline via PC-M6 by removal of the C-30 methyl group and oxidation at C-10 (PubMed:19801473). AtmQ, a cytochrome P450 monooxygenase, then catalyzes the oxidation of 13-desoxypaxilline, first at C-7 to produce paspalicine and then at C-13 to form paspalinine (PubMed:19801473). Finally, AtmD prenylates paspalinine to form aflatrem (PubMed:19801473).</text>
</comment>
<comment type="cofactor">
    <cofactor evidence="1">
        <name>heme</name>
        <dbReference type="ChEBI" id="CHEBI:30413"/>
    </cofactor>
</comment>
<comment type="pathway">
    <text evidence="7">Secondary metabolite biosynthesis.</text>
</comment>
<comment type="subcellular location">
    <subcellularLocation>
        <location evidence="2">Membrane</location>
        <topology evidence="2">Single-pass membrane protein</topology>
    </subcellularLocation>
</comment>
<comment type="induction">
    <text evidence="3">The onset of expression occurs at 60-hour-old stationary cultures and the steady-state levels correlates with the onset of aflatrem biosynthesis at 108 hours (PubMed:19801473).</text>
</comment>
<comment type="similarity">
    <text evidence="6">Belongs to the cytochrome P450 family.</text>
</comment>
<feature type="chain" id="PRO_0000436124" description="Cytochrome P450 monooxygenase AtmP">
    <location>
        <begin position="1"/>
        <end position="519"/>
    </location>
</feature>
<feature type="transmembrane region" description="Helical" evidence="2">
    <location>
        <begin position="21"/>
        <end position="41"/>
    </location>
</feature>
<feature type="binding site" description="axial binding residue" evidence="1">
    <location>
        <position position="457"/>
    </location>
    <ligand>
        <name>heme</name>
        <dbReference type="ChEBI" id="CHEBI:30413"/>
    </ligand>
    <ligandPart>
        <name>Fe</name>
        <dbReference type="ChEBI" id="CHEBI:18248"/>
    </ligandPart>
</feature>
<accession>A9JPE0</accession>
<reference key="1">
    <citation type="journal article" date="2009" name="Appl. Environ. Microbiol.">
        <title>Identification of two aflatrem biosynthesis gene loci in Aspergillus flavus and metabolic engineering of Penicillium paxilli to elucidate their function.</title>
        <authorList>
            <person name="Nicholson M.J."/>
            <person name="Koulman A."/>
            <person name="Monahan B.J."/>
            <person name="Pritchard B.L."/>
            <person name="Payne G.A."/>
            <person name="Scott B."/>
        </authorList>
    </citation>
    <scope>NUCLEOTIDE SEQUENCE [GENOMIC DNA]</scope>
    <scope>IDENTIFICATION</scope>
    <scope>INDUCTION</scope>
    <scope>FUNCTION</scope>
    <source>
        <strain>NRRL 6541</strain>
    </source>
</reference>
<reference key="2">
    <citation type="journal article" date="1985" name="Environ. Health Perspect.">
        <title>Aflatrem: a tremorgenic mycotoxin with acute neurotoxic effects.</title>
        <authorList>
            <person name="Valdes J.J."/>
            <person name="Cameron J.E."/>
            <person name="Cole R.J."/>
        </authorList>
    </citation>
    <scope>FUNCTION</scope>
</reference>
<evidence type="ECO:0000250" key="1">
    <source>
        <dbReference type="UniProtKB" id="P04798"/>
    </source>
</evidence>
<evidence type="ECO:0000255" key="2"/>
<evidence type="ECO:0000269" key="3">
    <source>
    </source>
</evidence>
<evidence type="ECO:0000269" key="4">
    <source>
    </source>
</evidence>
<evidence type="ECO:0000303" key="5">
    <source>
    </source>
</evidence>
<evidence type="ECO:0000305" key="6"/>
<evidence type="ECO:0000305" key="7">
    <source>
    </source>
</evidence>
<organism>
    <name type="scientific">Aspergillus flavus</name>
    <dbReference type="NCBI Taxonomy" id="5059"/>
    <lineage>
        <taxon>Eukaryota</taxon>
        <taxon>Fungi</taxon>
        <taxon>Dikarya</taxon>
        <taxon>Ascomycota</taxon>
        <taxon>Pezizomycotina</taxon>
        <taxon>Eurotiomycetes</taxon>
        <taxon>Eurotiomycetidae</taxon>
        <taxon>Eurotiales</taxon>
        <taxon>Aspergillaceae</taxon>
        <taxon>Aspergillus</taxon>
        <taxon>Aspergillus subgen. Circumdati</taxon>
    </lineage>
</organism>
<dbReference type="EC" id="1.-.-.-" evidence="7"/>
<dbReference type="EMBL" id="AM921700">
    <property type="protein sequence ID" value="CAP53941.1"/>
    <property type="molecule type" value="Genomic_DNA"/>
</dbReference>
<dbReference type="SMR" id="A9JPE0"/>
<dbReference type="VEuPathDB" id="FungiDB:AFLA_008141"/>
<dbReference type="VEuPathDB" id="FungiDB:F9C07_5881"/>
<dbReference type="BioCyc" id="MetaCyc:MONOMER-18805"/>
<dbReference type="GO" id="GO:0016020">
    <property type="term" value="C:membrane"/>
    <property type="evidence" value="ECO:0007669"/>
    <property type="project" value="UniProtKB-SubCell"/>
</dbReference>
<dbReference type="GO" id="GO:0020037">
    <property type="term" value="F:heme binding"/>
    <property type="evidence" value="ECO:0007669"/>
    <property type="project" value="InterPro"/>
</dbReference>
<dbReference type="GO" id="GO:0005506">
    <property type="term" value="F:iron ion binding"/>
    <property type="evidence" value="ECO:0007669"/>
    <property type="project" value="InterPro"/>
</dbReference>
<dbReference type="GO" id="GO:0004497">
    <property type="term" value="F:monooxygenase activity"/>
    <property type="evidence" value="ECO:0007669"/>
    <property type="project" value="UniProtKB-KW"/>
</dbReference>
<dbReference type="GO" id="GO:0016705">
    <property type="term" value="F:oxidoreductase activity, acting on paired donors, with incorporation or reduction of molecular oxygen"/>
    <property type="evidence" value="ECO:0007669"/>
    <property type="project" value="InterPro"/>
</dbReference>
<dbReference type="GO" id="GO:0019748">
    <property type="term" value="P:secondary metabolic process"/>
    <property type="evidence" value="ECO:0007669"/>
    <property type="project" value="UniProtKB-ARBA"/>
</dbReference>
<dbReference type="CDD" id="cd11041">
    <property type="entry name" value="CYP503A1-like"/>
    <property type="match status" value="1"/>
</dbReference>
<dbReference type="Gene3D" id="1.10.630.10">
    <property type="entry name" value="Cytochrome P450"/>
    <property type="match status" value="1"/>
</dbReference>
<dbReference type="InterPro" id="IPR001128">
    <property type="entry name" value="Cyt_P450"/>
</dbReference>
<dbReference type="InterPro" id="IPR002403">
    <property type="entry name" value="Cyt_P450_E_grp-IV"/>
</dbReference>
<dbReference type="InterPro" id="IPR036396">
    <property type="entry name" value="Cyt_P450_sf"/>
</dbReference>
<dbReference type="PANTHER" id="PTHR46206">
    <property type="entry name" value="CYTOCHROME P450"/>
    <property type="match status" value="1"/>
</dbReference>
<dbReference type="PANTHER" id="PTHR46206:SF7">
    <property type="entry name" value="P450, PUTATIVE (EUROFUNG)-RELATED"/>
    <property type="match status" value="1"/>
</dbReference>
<dbReference type="Pfam" id="PF00067">
    <property type="entry name" value="p450"/>
    <property type="match status" value="1"/>
</dbReference>
<dbReference type="PRINTS" id="PR00465">
    <property type="entry name" value="EP450IV"/>
</dbReference>
<dbReference type="SUPFAM" id="SSF48264">
    <property type="entry name" value="Cytochrome P450"/>
    <property type="match status" value="1"/>
</dbReference>
<keyword id="KW-0349">Heme</keyword>
<keyword id="KW-0408">Iron</keyword>
<keyword id="KW-0472">Membrane</keyword>
<keyword id="KW-0479">Metal-binding</keyword>
<keyword id="KW-0503">Monooxygenase</keyword>
<keyword id="KW-0560">Oxidoreductase</keyword>
<keyword id="KW-0812">Transmembrane</keyword>
<keyword id="KW-1133">Transmembrane helix</keyword>
<name>ATMP_ASPFL</name>